<keyword id="KW-1185">Reference proteome</keyword>
<feature type="chain" id="PRO_0000202828" description="Extender of the chronological lifespan protein 1">
    <location>
        <begin position="1"/>
        <end position="211"/>
    </location>
</feature>
<accession>P48235</accession>
<accession>D6VUS6</accession>
<name>ECL1_YEAST</name>
<dbReference type="EMBL" id="X85807">
    <property type="protein sequence ID" value="CAA59804.1"/>
    <property type="molecule type" value="Genomic_DNA"/>
</dbReference>
<dbReference type="EMBL" id="Z72931">
    <property type="protein sequence ID" value="CAA97160.1"/>
    <property type="molecule type" value="Genomic_DNA"/>
</dbReference>
<dbReference type="EMBL" id="BK006941">
    <property type="protein sequence ID" value="DAA08237.1"/>
    <property type="molecule type" value="Genomic_DNA"/>
</dbReference>
<dbReference type="PIR" id="S60437">
    <property type="entry name" value="S60437"/>
</dbReference>
<dbReference type="RefSeq" id="NP_011662.3">
    <property type="nucleotide sequence ID" value="NM_001181275.3"/>
</dbReference>
<dbReference type="BioGRID" id="33394">
    <property type="interactions" value="59"/>
</dbReference>
<dbReference type="DIP" id="DIP-2885N"/>
<dbReference type="FunCoup" id="P48235">
    <property type="interactions" value="81"/>
</dbReference>
<dbReference type="IntAct" id="P48235">
    <property type="interactions" value="2"/>
</dbReference>
<dbReference type="STRING" id="4932.YGR146C"/>
<dbReference type="iPTMnet" id="P48235"/>
<dbReference type="PaxDb" id="4932-YGR146C"/>
<dbReference type="PeptideAtlas" id="P48235"/>
<dbReference type="EnsemblFungi" id="YGR146C_mRNA">
    <property type="protein sequence ID" value="YGR146C"/>
    <property type="gene ID" value="YGR146C"/>
</dbReference>
<dbReference type="GeneID" id="853049"/>
<dbReference type="KEGG" id="sce:YGR146C"/>
<dbReference type="AGR" id="SGD:S000003378"/>
<dbReference type="SGD" id="S000003378">
    <property type="gene designation" value="ECL1"/>
</dbReference>
<dbReference type="VEuPathDB" id="FungiDB:YGR146C"/>
<dbReference type="HOGENOM" id="CLU_125577_0_0_1"/>
<dbReference type="InParanoid" id="P48235"/>
<dbReference type="OMA" id="MCKLRDS"/>
<dbReference type="OrthoDB" id="2563506at2759"/>
<dbReference type="BioCyc" id="YEAST:G3O-30850-MONOMER"/>
<dbReference type="BioGRID-ORCS" id="853049">
    <property type="hits" value="0 hits in 10 CRISPR screens"/>
</dbReference>
<dbReference type="PRO" id="PR:P48235"/>
<dbReference type="Proteomes" id="UP000002311">
    <property type="component" value="Chromosome VII"/>
</dbReference>
<dbReference type="RNAct" id="P48235">
    <property type="molecule type" value="protein"/>
</dbReference>
<sequence length="211" mass="23997">MSTAFNDYCTVCDRLIPTSPQKTNINTRKIQRDNETKSSLQSNKLYCSEDCKLKDSNPLNEKLLSHLHKKSKTSHSHNLTPPLSYSKNLTASNLFEPTTSLSSSPTSSTIPFDELEKLESLLISPLLLPQDGIVNPKQESNPSRVDEYDENEHYLNLADSLRLDSSYQLHSKAHLGYENNLPRSNDLIDDHLISDQIIENNYNLWFRLSSS</sequence>
<reference key="1">
    <citation type="journal article" date="1995" name="Yeast">
        <title>The sequence of a 27 kb segment on the right arm of chromosome VII from Saccharomyces cerevisiae reveals MOL1, NAT2, RPL30B, RSR1, CYS4, PEM1/CHO2, NSR1 genes and ten new open reading frames.</title>
        <authorList>
            <person name="Skala J."/>
            <person name="Nawrocki A."/>
            <person name="Goffeau A."/>
        </authorList>
    </citation>
    <scope>NUCLEOTIDE SEQUENCE [GENOMIC DNA]</scope>
    <source>
        <strain>ATCC 204508 / S288c</strain>
    </source>
</reference>
<reference key="2">
    <citation type="journal article" date="1997" name="Nature">
        <title>The nucleotide sequence of Saccharomyces cerevisiae chromosome VII.</title>
        <authorList>
            <person name="Tettelin H."/>
            <person name="Agostoni-Carbone M.L."/>
            <person name="Albermann K."/>
            <person name="Albers M."/>
            <person name="Arroyo J."/>
            <person name="Backes U."/>
            <person name="Barreiros T."/>
            <person name="Bertani I."/>
            <person name="Bjourson A.J."/>
            <person name="Brueckner M."/>
            <person name="Bruschi C.V."/>
            <person name="Carignani G."/>
            <person name="Castagnoli L."/>
            <person name="Cerdan E."/>
            <person name="Clemente M.L."/>
            <person name="Coblenz A."/>
            <person name="Coglievina M."/>
            <person name="Coissac E."/>
            <person name="Defoor E."/>
            <person name="Del Bino S."/>
            <person name="Delius H."/>
            <person name="Delneri D."/>
            <person name="de Wergifosse P."/>
            <person name="Dujon B."/>
            <person name="Durand P."/>
            <person name="Entian K.-D."/>
            <person name="Eraso P."/>
            <person name="Escribano V."/>
            <person name="Fabiani L."/>
            <person name="Fartmann B."/>
            <person name="Feroli F."/>
            <person name="Feuermann M."/>
            <person name="Frontali L."/>
            <person name="Garcia-Gonzalez M."/>
            <person name="Garcia-Saez M.I."/>
            <person name="Goffeau A."/>
            <person name="Guerreiro P."/>
            <person name="Hani J."/>
            <person name="Hansen M."/>
            <person name="Hebling U."/>
            <person name="Hernandez K."/>
            <person name="Heumann K."/>
            <person name="Hilger F."/>
            <person name="Hofmann B."/>
            <person name="Indge K.J."/>
            <person name="James C.M."/>
            <person name="Klima R."/>
            <person name="Koetter P."/>
            <person name="Kramer B."/>
            <person name="Kramer W."/>
            <person name="Lauquin G."/>
            <person name="Leuther H."/>
            <person name="Louis E.J."/>
            <person name="Maillier E."/>
            <person name="Marconi A."/>
            <person name="Martegani E."/>
            <person name="Mazon M.J."/>
            <person name="Mazzoni C."/>
            <person name="McReynolds A.D.K."/>
            <person name="Melchioretto P."/>
            <person name="Mewes H.-W."/>
            <person name="Minenkova O."/>
            <person name="Mueller-Auer S."/>
            <person name="Nawrocki A."/>
            <person name="Netter P."/>
            <person name="Neu R."/>
            <person name="Nombela C."/>
            <person name="Oliver S.G."/>
            <person name="Panzeri L."/>
            <person name="Paoluzi S."/>
            <person name="Plevani P."/>
            <person name="Portetelle D."/>
            <person name="Portillo F."/>
            <person name="Potier S."/>
            <person name="Purnelle B."/>
            <person name="Rieger M."/>
            <person name="Riles L."/>
            <person name="Rinaldi T."/>
            <person name="Robben J."/>
            <person name="Rodrigues-Pousada C."/>
            <person name="Rodriguez-Belmonte E."/>
            <person name="Rodriguez-Torres A.M."/>
            <person name="Rose M."/>
            <person name="Ruzzi M."/>
            <person name="Saliola M."/>
            <person name="Sanchez-Perez M."/>
            <person name="Schaefer B."/>
            <person name="Schaefer M."/>
            <person name="Scharfe M."/>
            <person name="Schmidheini T."/>
            <person name="Schreer A."/>
            <person name="Skala J."/>
            <person name="Souciet J.-L."/>
            <person name="Steensma H.Y."/>
            <person name="Talla E."/>
            <person name="Thierry A."/>
            <person name="Vandenbol M."/>
            <person name="van der Aart Q.J.M."/>
            <person name="Van Dyck L."/>
            <person name="Vanoni M."/>
            <person name="Verhasselt P."/>
            <person name="Voet M."/>
            <person name="Volckaert G."/>
            <person name="Wambutt R."/>
            <person name="Watson M.D."/>
            <person name="Weber N."/>
            <person name="Wedler E."/>
            <person name="Wedler H."/>
            <person name="Wipfli P."/>
            <person name="Wolf K."/>
            <person name="Wright L.F."/>
            <person name="Zaccaria P."/>
            <person name="Zimmermann M."/>
            <person name="Zollner A."/>
            <person name="Kleine K."/>
        </authorList>
    </citation>
    <scope>NUCLEOTIDE SEQUENCE [LARGE SCALE GENOMIC DNA]</scope>
    <source>
        <strain>ATCC 204508 / S288c</strain>
    </source>
</reference>
<reference key="3">
    <citation type="journal article" date="2014" name="G3 (Bethesda)">
        <title>The reference genome sequence of Saccharomyces cerevisiae: Then and now.</title>
        <authorList>
            <person name="Engel S.R."/>
            <person name="Dietrich F.S."/>
            <person name="Fisk D.G."/>
            <person name="Binkley G."/>
            <person name="Balakrishnan R."/>
            <person name="Costanzo M.C."/>
            <person name="Dwight S.S."/>
            <person name="Hitz B.C."/>
            <person name="Karra K."/>
            <person name="Nash R.S."/>
            <person name="Weng S."/>
            <person name="Wong E.D."/>
            <person name="Lloyd P."/>
            <person name="Skrzypek M.S."/>
            <person name="Miyasato S.R."/>
            <person name="Simison M."/>
            <person name="Cherry J.M."/>
        </authorList>
    </citation>
    <scope>GENOME REANNOTATION</scope>
    <source>
        <strain>ATCC 204508 / S288c</strain>
    </source>
</reference>
<reference key="4">
    <citation type="journal article" date="2003" name="J. Biol. Chem.">
        <title>Aft1p and Aft2p mediate iron-responsive gene expression in yeast through related promoter elements.</title>
        <authorList>
            <person name="Rutherford J.C."/>
            <person name="Jaron S."/>
            <person name="Winge D.R."/>
        </authorList>
    </citation>
    <scope>INDUCTION</scope>
</reference>
<reference key="5">
    <citation type="journal article" date="2003" name="Nature">
        <title>Global analysis of protein expression in yeast.</title>
        <authorList>
            <person name="Ghaemmaghami S."/>
            <person name="Huh W.-K."/>
            <person name="Bower K."/>
            <person name="Howson R.W."/>
            <person name="Belle A."/>
            <person name="Dephoure N."/>
            <person name="O'Shea E.K."/>
            <person name="Weissman J.S."/>
        </authorList>
    </citation>
    <scope>LEVEL OF PROTEIN EXPRESSION [LARGE SCALE ANALYSIS]</scope>
</reference>
<reference key="6">
    <citation type="journal article" date="2007" name="FEMS Yeast Res.">
        <title>Specific transcriptional responses induced by 8-methoxypsoralen and UVA in yeast.</title>
        <authorList>
            <person name="Dardalhon M."/>
            <person name="Lin W."/>
            <person name="Nicolas A."/>
            <person name="Averbeck D."/>
        </authorList>
    </citation>
    <scope>INDUCTION</scope>
</reference>
<reference key="7">
    <citation type="journal article" date="2009" name="Biosci. Biotechnol. Biochem.">
        <title>Identification and characterization of an Ecl1-family gene in Saccharomyces cerevisiae.</title>
        <authorList>
            <person name="Azuma K."/>
            <person name="Ohtsuka H."/>
            <person name="Mita S."/>
            <person name="Murakami H."/>
            <person name="Aiba H."/>
        </authorList>
    </citation>
    <scope>FUNCTION</scope>
</reference>
<organism>
    <name type="scientific">Saccharomyces cerevisiae (strain ATCC 204508 / S288c)</name>
    <name type="common">Baker's yeast</name>
    <dbReference type="NCBI Taxonomy" id="559292"/>
    <lineage>
        <taxon>Eukaryota</taxon>
        <taxon>Fungi</taxon>
        <taxon>Dikarya</taxon>
        <taxon>Ascomycota</taxon>
        <taxon>Saccharomycotina</taxon>
        <taxon>Saccharomycetes</taxon>
        <taxon>Saccharomycetales</taxon>
        <taxon>Saccharomycetaceae</taxon>
        <taxon>Saccharomyces</taxon>
    </lineage>
</organism>
<comment type="function">
    <text evidence="4">Involved in chronological cell aging.</text>
</comment>
<comment type="induction">
    <text evidence="1 3">Expression is induced by the AFT2 iron homeostasis transcription factor, as well as by 8-methoxypsoralen and UVA radiation.</text>
</comment>
<comment type="miscellaneous">
    <text evidence="2">Present with 589 molecules/cell in log phase SD medium.</text>
</comment>
<comment type="similarity">
    <text evidence="5">Belongs to the ecl1 family.</text>
</comment>
<gene>
    <name type="primary">ECL1</name>
    <name type="ordered locus">YGR146C</name>
    <name type="ORF">G6626</name>
</gene>
<proteinExistence type="evidence at protein level"/>
<protein>
    <recommendedName>
        <fullName>Extender of the chronological lifespan protein 1</fullName>
    </recommendedName>
</protein>
<evidence type="ECO:0000269" key="1">
    <source>
    </source>
</evidence>
<evidence type="ECO:0000269" key="2">
    <source>
    </source>
</evidence>
<evidence type="ECO:0000269" key="3">
    <source>
    </source>
</evidence>
<evidence type="ECO:0000269" key="4">
    <source>
    </source>
</evidence>
<evidence type="ECO:0000305" key="5"/>